<name>EFP_PROM0</name>
<keyword id="KW-0963">Cytoplasm</keyword>
<keyword id="KW-0251">Elongation factor</keyword>
<keyword id="KW-0648">Protein biosynthesis</keyword>
<keyword id="KW-1185">Reference proteome</keyword>
<proteinExistence type="inferred from homology"/>
<accession>A3PA73</accession>
<reference key="1">
    <citation type="journal article" date="2007" name="PLoS Genet.">
        <title>Patterns and implications of gene gain and loss in the evolution of Prochlorococcus.</title>
        <authorList>
            <person name="Kettler G.C."/>
            <person name="Martiny A.C."/>
            <person name="Huang K."/>
            <person name="Zucker J."/>
            <person name="Coleman M.L."/>
            <person name="Rodrigue S."/>
            <person name="Chen F."/>
            <person name="Lapidus A."/>
            <person name="Ferriera S."/>
            <person name="Johnson J."/>
            <person name="Steglich C."/>
            <person name="Church G.M."/>
            <person name="Richardson P."/>
            <person name="Chisholm S.W."/>
        </authorList>
    </citation>
    <scope>NUCLEOTIDE SEQUENCE [LARGE SCALE GENOMIC DNA]</scope>
    <source>
        <strain>MIT 9301</strain>
    </source>
</reference>
<protein>
    <recommendedName>
        <fullName evidence="1">Elongation factor P</fullName>
        <shortName evidence="1">EF-P</shortName>
    </recommendedName>
</protein>
<gene>
    <name evidence="1" type="primary">efp</name>
    <name type="ordered locus">P9301_00251</name>
</gene>
<comment type="function">
    <text evidence="1">Involved in peptide bond synthesis. Stimulates efficient translation and peptide-bond synthesis on native or reconstituted 70S ribosomes in vitro. Probably functions indirectly by altering the affinity of the ribosome for aminoacyl-tRNA, thus increasing their reactivity as acceptors for peptidyl transferase.</text>
</comment>
<comment type="pathway">
    <text evidence="1">Protein biosynthesis; polypeptide chain elongation.</text>
</comment>
<comment type="subcellular location">
    <subcellularLocation>
        <location evidence="1">Cytoplasm</location>
    </subcellularLocation>
</comment>
<comment type="similarity">
    <text evidence="1">Belongs to the elongation factor P family.</text>
</comment>
<sequence length="186" mass="20504">MISSNDFRTGTTIELDGQVWRVVEFLHVKPGKGSAFVRTKLKSVQNGNVVEKTFRAGESVQQAILEKSNLQHTYVESGDYVFMDMTSFEETRLSSEQIGKGAKYLKEGMEVNVIFHNGKVLEVELPISITLKVTETDPGVKGDTASGGTKPAILETGAQVMVPLFISVGEMIRVDTRNDSYLGREN</sequence>
<evidence type="ECO:0000255" key="1">
    <source>
        <dbReference type="HAMAP-Rule" id="MF_00141"/>
    </source>
</evidence>
<feature type="chain" id="PRO_1000010803" description="Elongation factor P">
    <location>
        <begin position="1"/>
        <end position="186"/>
    </location>
</feature>
<dbReference type="EMBL" id="CP000576">
    <property type="protein sequence ID" value="ABO16648.1"/>
    <property type="molecule type" value="Genomic_DNA"/>
</dbReference>
<dbReference type="RefSeq" id="WP_011862053.1">
    <property type="nucleotide sequence ID" value="NC_009091.1"/>
</dbReference>
<dbReference type="SMR" id="A3PA73"/>
<dbReference type="STRING" id="167546.P9301_00251"/>
<dbReference type="KEGG" id="pmg:P9301_00251"/>
<dbReference type="eggNOG" id="COG0231">
    <property type="taxonomic scope" value="Bacteria"/>
</dbReference>
<dbReference type="HOGENOM" id="CLU_074944_0_1_3"/>
<dbReference type="OrthoDB" id="9801844at2"/>
<dbReference type="UniPathway" id="UPA00345"/>
<dbReference type="Proteomes" id="UP000001430">
    <property type="component" value="Chromosome"/>
</dbReference>
<dbReference type="GO" id="GO:0005737">
    <property type="term" value="C:cytoplasm"/>
    <property type="evidence" value="ECO:0007669"/>
    <property type="project" value="UniProtKB-SubCell"/>
</dbReference>
<dbReference type="GO" id="GO:0003746">
    <property type="term" value="F:translation elongation factor activity"/>
    <property type="evidence" value="ECO:0007669"/>
    <property type="project" value="UniProtKB-UniRule"/>
</dbReference>
<dbReference type="GO" id="GO:0043043">
    <property type="term" value="P:peptide biosynthetic process"/>
    <property type="evidence" value="ECO:0007669"/>
    <property type="project" value="InterPro"/>
</dbReference>
<dbReference type="CDD" id="cd04470">
    <property type="entry name" value="S1_EF-P_repeat_1"/>
    <property type="match status" value="1"/>
</dbReference>
<dbReference type="CDD" id="cd05794">
    <property type="entry name" value="S1_EF-P_repeat_2"/>
    <property type="match status" value="1"/>
</dbReference>
<dbReference type="FunFam" id="2.30.30.30:FF:000003">
    <property type="entry name" value="Elongation factor P"/>
    <property type="match status" value="1"/>
</dbReference>
<dbReference type="FunFam" id="2.40.50.140:FF:000004">
    <property type="entry name" value="Elongation factor P"/>
    <property type="match status" value="1"/>
</dbReference>
<dbReference type="FunFam" id="2.40.50.140:FF:000009">
    <property type="entry name" value="Elongation factor P"/>
    <property type="match status" value="1"/>
</dbReference>
<dbReference type="Gene3D" id="2.30.30.30">
    <property type="match status" value="1"/>
</dbReference>
<dbReference type="Gene3D" id="2.40.50.140">
    <property type="entry name" value="Nucleic acid-binding proteins"/>
    <property type="match status" value="2"/>
</dbReference>
<dbReference type="HAMAP" id="MF_00141">
    <property type="entry name" value="EF_P"/>
    <property type="match status" value="1"/>
</dbReference>
<dbReference type="InterPro" id="IPR015365">
    <property type="entry name" value="Elong-fact-P_C"/>
</dbReference>
<dbReference type="InterPro" id="IPR012340">
    <property type="entry name" value="NA-bd_OB-fold"/>
</dbReference>
<dbReference type="InterPro" id="IPR014722">
    <property type="entry name" value="Rib_uL2_dom2"/>
</dbReference>
<dbReference type="InterPro" id="IPR020599">
    <property type="entry name" value="Transl_elong_fac_P/YeiP"/>
</dbReference>
<dbReference type="InterPro" id="IPR013185">
    <property type="entry name" value="Transl_elong_KOW-like"/>
</dbReference>
<dbReference type="InterPro" id="IPR001059">
    <property type="entry name" value="Transl_elong_P/YeiP_cen"/>
</dbReference>
<dbReference type="InterPro" id="IPR013852">
    <property type="entry name" value="Transl_elong_P/YeiP_CS"/>
</dbReference>
<dbReference type="InterPro" id="IPR011768">
    <property type="entry name" value="Transl_elongation_fac_P"/>
</dbReference>
<dbReference type="InterPro" id="IPR008991">
    <property type="entry name" value="Translation_prot_SH3-like_sf"/>
</dbReference>
<dbReference type="NCBIfam" id="TIGR00038">
    <property type="entry name" value="efp"/>
    <property type="match status" value="1"/>
</dbReference>
<dbReference type="NCBIfam" id="NF001810">
    <property type="entry name" value="PRK00529.1"/>
    <property type="match status" value="1"/>
</dbReference>
<dbReference type="PANTHER" id="PTHR30053">
    <property type="entry name" value="ELONGATION FACTOR P"/>
    <property type="match status" value="1"/>
</dbReference>
<dbReference type="PANTHER" id="PTHR30053:SF12">
    <property type="entry name" value="ELONGATION FACTOR P (EF-P) FAMILY PROTEIN"/>
    <property type="match status" value="1"/>
</dbReference>
<dbReference type="Pfam" id="PF01132">
    <property type="entry name" value="EFP"/>
    <property type="match status" value="1"/>
</dbReference>
<dbReference type="Pfam" id="PF08207">
    <property type="entry name" value="EFP_N"/>
    <property type="match status" value="1"/>
</dbReference>
<dbReference type="Pfam" id="PF09285">
    <property type="entry name" value="Elong-fact-P_C"/>
    <property type="match status" value="1"/>
</dbReference>
<dbReference type="PIRSF" id="PIRSF005901">
    <property type="entry name" value="EF-P"/>
    <property type="match status" value="1"/>
</dbReference>
<dbReference type="SMART" id="SM01185">
    <property type="entry name" value="EFP"/>
    <property type="match status" value="1"/>
</dbReference>
<dbReference type="SMART" id="SM00841">
    <property type="entry name" value="Elong-fact-P_C"/>
    <property type="match status" value="1"/>
</dbReference>
<dbReference type="SUPFAM" id="SSF50249">
    <property type="entry name" value="Nucleic acid-binding proteins"/>
    <property type="match status" value="2"/>
</dbReference>
<dbReference type="SUPFAM" id="SSF50104">
    <property type="entry name" value="Translation proteins SH3-like domain"/>
    <property type="match status" value="1"/>
</dbReference>
<dbReference type="PROSITE" id="PS01275">
    <property type="entry name" value="EFP"/>
    <property type="match status" value="1"/>
</dbReference>
<organism>
    <name type="scientific">Prochlorococcus marinus (strain MIT 9301)</name>
    <dbReference type="NCBI Taxonomy" id="167546"/>
    <lineage>
        <taxon>Bacteria</taxon>
        <taxon>Bacillati</taxon>
        <taxon>Cyanobacteriota</taxon>
        <taxon>Cyanophyceae</taxon>
        <taxon>Synechococcales</taxon>
        <taxon>Prochlorococcaceae</taxon>
        <taxon>Prochlorococcus</taxon>
    </lineage>
</organism>